<evidence type="ECO:0000250" key="1"/>
<evidence type="ECO:0000255" key="2">
    <source>
        <dbReference type="PROSITE-ProRule" id="PRU00108"/>
    </source>
</evidence>
<evidence type="ECO:0000256" key="3">
    <source>
        <dbReference type="SAM" id="MobiDB-lite"/>
    </source>
</evidence>
<evidence type="ECO:0000269" key="4">
    <source>
    </source>
</evidence>
<evidence type="ECO:0000269" key="5">
    <source>
    </source>
</evidence>
<evidence type="ECO:0000269" key="6">
    <source>
    </source>
</evidence>
<evidence type="ECO:0000305" key="7"/>
<accession>Q9SW80</accession>
<accession>F4JQI6</accession>
<accession>O23196</accession>
<sequence>MGITKTSPNTTILLKTFHNNSMSQDYHHHHHHNQHQGGIFNFSNGFDRSDSPNLTTQQKQEHQRVEMDEESSVAGGRIPVYESAGMLSEMFNFPGSSGGGRDLDLGQSFRSNRQLLEEQHQNIPAMNATDSATATAAAMQLFLMNPPPPQQPPSPSSTTSPRSHHNSSTLHMLLPSPSTNTTHHQNYTNHMSMHQLPHQHHQQISTWQSSPDHHHHHHNSQTEIGTVHVENSGGHGGQGLSLSLSSSLEAAAKAEEYRNIYYGANSSNASPHHQYNQFKTLLANSSQHHHQVLNQFRSSPAASSSSMAAVNILRNSRYTTAAQELLEEFCSVGRGFLKKNKLGNSSNPNTCGGDGGGSSPSSAGANKEHPPLSASDRIEHQRRKVKLLTMLEEVDRRYNHYCEQMQMVVNSFDIVMGHGAALPYTALAQKAMSRHFRCLKDAVAAQLKQSCELLGDKDAAGISSSGLTKGETPRLRLLEQSLRQNRAFHQMGMMEQEAWRPQRGLPERSVNILRAWLFEHFLHPYPSDADKHLLARQTGLSRNQVSNWFINARVRLWKPMVEEMYQQESKEREREEELEENEEDQETKNSNDDKSTKSNNNESNFTAVRTTSQTPTTTAPDASDADAAVATGHRLRSNINAYENDASSLLLPSSYSNAAAPAAVSDDLNSRYGGSDAFSAVATCQQSVGGFDDADMDGVNVIRFGTNPTGDVSLTLGLRHAGNMPDKDASFCVREFGGF</sequence>
<proteinExistence type="evidence at protein level"/>
<dbReference type="EMBL" id="AF173816">
    <property type="protein sequence ID" value="AAD51349.1"/>
    <property type="molecule type" value="mRNA"/>
</dbReference>
<dbReference type="EMBL" id="Z99707">
    <property type="protein sequence ID" value="CAB16801.2"/>
    <property type="status" value="ALT_SEQ"/>
    <property type="molecule type" value="Genomic_DNA"/>
</dbReference>
<dbReference type="EMBL" id="AL161590">
    <property type="protein sequence ID" value="CAB80353.1"/>
    <property type="status" value="ALT_SEQ"/>
    <property type="molecule type" value="Genomic_DNA"/>
</dbReference>
<dbReference type="EMBL" id="CP002687">
    <property type="protein sequence ID" value="AEE86711.1"/>
    <property type="molecule type" value="Genomic_DNA"/>
</dbReference>
<dbReference type="EMBL" id="CP002687">
    <property type="protein sequence ID" value="AEE86712.1"/>
    <property type="molecule type" value="Genomic_DNA"/>
</dbReference>
<dbReference type="EMBL" id="AY050459">
    <property type="protein sequence ID" value="AAK91472.1"/>
    <property type="molecule type" value="mRNA"/>
</dbReference>
<dbReference type="PIR" id="D85435">
    <property type="entry name" value="D85435"/>
</dbReference>
<dbReference type="RefSeq" id="NP_001031797.4">
    <property type="nucleotide sequence ID" value="NM_001036720.5"/>
</dbReference>
<dbReference type="RefSeq" id="NP_195405.4">
    <property type="nucleotide sequence ID" value="NM_119851.6"/>
</dbReference>
<dbReference type="SMR" id="Q9SW80"/>
<dbReference type="BioGRID" id="15121">
    <property type="interactions" value="16"/>
</dbReference>
<dbReference type="FunCoup" id="Q9SW80">
    <property type="interactions" value="850"/>
</dbReference>
<dbReference type="IntAct" id="Q9SW80">
    <property type="interactions" value="12"/>
</dbReference>
<dbReference type="STRING" id="3702.Q9SW80"/>
<dbReference type="GlyGen" id="Q9SW80">
    <property type="glycosylation" value="2 sites, 1 O-linked glycan (2 sites)"/>
</dbReference>
<dbReference type="iPTMnet" id="Q9SW80"/>
<dbReference type="PaxDb" id="3702-AT4G36870.2"/>
<dbReference type="ProteomicsDB" id="240700"/>
<dbReference type="EnsemblPlants" id="AT4G36870.1">
    <property type="protein sequence ID" value="AT4G36870.1"/>
    <property type="gene ID" value="AT4G36870"/>
</dbReference>
<dbReference type="EnsemblPlants" id="AT4G36870.2">
    <property type="protein sequence ID" value="AT4G36870.2"/>
    <property type="gene ID" value="AT4G36870"/>
</dbReference>
<dbReference type="GeneID" id="829840"/>
<dbReference type="Gramene" id="AT4G36870.1">
    <property type="protein sequence ID" value="AT4G36870.1"/>
    <property type="gene ID" value="AT4G36870"/>
</dbReference>
<dbReference type="Gramene" id="AT4G36870.2">
    <property type="protein sequence ID" value="AT4G36870.2"/>
    <property type="gene ID" value="AT4G36870"/>
</dbReference>
<dbReference type="KEGG" id="ath:AT4G36870"/>
<dbReference type="Araport" id="AT4G36870"/>
<dbReference type="TAIR" id="AT4G36870">
    <property type="gene designation" value="BLH2"/>
</dbReference>
<dbReference type="eggNOG" id="KOG0773">
    <property type="taxonomic scope" value="Eukaryota"/>
</dbReference>
<dbReference type="HOGENOM" id="CLU_011058_2_0_1"/>
<dbReference type="InParanoid" id="Q9SW80"/>
<dbReference type="OMA" id="HNIGTVH"/>
<dbReference type="PRO" id="PR:Q9SW80"/>
<dbReference type="Proteomes" id="UP000006548">
    <property type="component" value="Chromosome 4"/>
</dbReference>
<dbReference type="ExpressionAtlas" id="Q9SW80">
    <property type="expression patterns" value="baseline and differential"/>
</dbReference>
<dbReference type="GO" id="GO:0005634">
    <property type="term" value="C:nucleus"/>
    <property type="evidence" value="ECO:0007669"/>
    <property type="project" value="UniProtKB-SubCell"/>
</dbReference>
<dbReference type="GO" id="GO:0003700">
    <property type="term" value="F:DNA-binding transcription factor activity"/>
    <property type="evidence" value="ECO:0000250"/>
    <property type="project" value="TAIR"/>
</dbReference>
<dbReference type="GO" id="GO:0000976">
    <property type="term" value="F:transcription cis-regulatory region binding"/>
    <property type="evidence" value="ECO:0000353"/>
    <property type="project" value="TAIR"/>
</dbReference>
<dbReference type="GO" id="GO:0009965">
    <property type="term" value="P:leaf morphogenesis"/>
    <property type="evidence" value="ECO:0000316"/>
    <property type="project" value="TAIR"/>
</dbReference>
<dbReference type="GO" id="GO:0048363">
    <property type="term" value="P:mucilage pectin metabolic process"/>
    <property type="evidence" value="ECO:0000315"/>
    <property type="project" value="TAIR"/>
</dbReference>
<dbReference type="CDD" id="cd00086">
    <property type="entry name" value="homeodomain"/>
    <property type="match status" value="1"/>
</dbReference>
<dbReference type="FunFam" id="1.10.10.60:FF:000083">
    <property type="entry name" value="BEL1-like homeodomain protein 4"/>
    <property type="match status" value="1"/>
</dbReference>
<dbReference type="Gene3D" id="1.10.10.60">
    <property type="entry name" value="Homeodomain-like"/>
    <property type="match status" value="1"/>
</dbReference>
<dbReference type="InterPro" id="IPR001356">
    <property type="entry name" value="HD"/>
</dbReference>
<dbReference type="InterPro" id="IPR009057">
    <property type="entry name" value="Homeodomain-like_sf"/>
</dbReference>
<dbReference type="InterPro" id="IPR008422">
    <property type="entry name" value="KN_HD"/>
</dbReference>
<dbReference type="InterPro" id="IPR006563">
    <property type="entry name" value="POX_dom"/>
</dbReference>
<dbReference type="InterPro" id="IPR050224">
    <property type="entry name" value="TALE_homeobox"/>
</dbReference>
<dbReference type="PANTHER" id="PTHR11850">
    <property type="entry name" value="HOMEOBOX PROTEIN TRANSCRIPTION FACTORS"/>
    <property type="match status" value="1"/>
</dbReference>
<dbReference type="Pfam" id="PF05920">
    <property type="entry name" value="Homeobox_KN"/>
    <property type="match status" value="1"/>
</dbReference>
<dbReference type="Pfam" id="PF07526">
    <property type="entry name" value="POX"/>
    <property type="match status" value="1"/>
</dbReference>
<dbReference type="SMART" id="SM00389">
    <property type="entry name" value="HOX"/>
    <property type="match status" value="1"/>
</dbReference>
<dbReference type="SMART" id="SM00574">
    <property type="entry name" value="POX"/>
    <property type="match status" value="1"/>
</dbReference>
<dbReference type="SUPFAM" id="SSF46689">
    <property type="entry name" value="Homeodomain-like"/>
    <property type="match status" value="1"/>
</dbReference>
<dbReference type="PROSITE" id="PS00027">
    <property type="entry name" value="HOMEOBOX_1"/>
    <property type="match status" value="1"/>
</dbReference>
<dbReference type="PROSITE" id="PS50071">
    <property type="entry name" value="HOMEOBOX_2"/>
    <property type="match status" value="1"/>
</dbReference>
<protein>
    <recommendedName>
        <fullName>BEL1-like homeodomain protein 2</fullName>
        <shortName>BEL1-like protein 2</shortName>
    </recommendedName>
    <alternativeName>
        <fullName>Protein SAWTOOTH 1</fullName>
    </alternativeName>
</protein>
<comment type="function">
    <text>Transcription factor that establishes leaf shape by repressing growth in specific subdomains of the leaf. Negatively regulates knox homeobox gene KNAT1/BP expression.</text>
</comment>
<comment type="subunit">
    <text evidence="4 5 6">May form heterodimeric complexes with TALE/KNOX proteins STM, KNAT1/BP, KNAT2 and KNAT5 (PubMed:17873098). Interacts with OFP1, OFP2, OFP4 and OFP5 (PubMed:15781858). Interacts with KNATM, isoform KNATM-B (PubMed:18398054).</text>
</comment>
<comment type="subcellular location">
    <subcellularLocation>
        <location evidence="7">Nucleus</location>
    </subcellularLocation>
</comment>
<comment type="tissue specificity">
    <text evidence="5">Expressed in lateral organs.</text>
</comment>
<comment type="domain">
    <text>The SR/KY and BELL domains are responsive for the interaction between the TALE/BELL proteins and the TALE/KNOX proteins.</text>
</comment>
<comment type="similarity">
    <text evidence="7">Belongs to the TALE/BELL homeobox family.</text>
</comment>
<comment type="sequence caution" evidence="7">
    <conflict type="erroneous gene model prediction">
        <sequence resource="EMBL-CDS" id="CAB16801"/>
    </conflict>
</comment>
<comment type="sequence caution" evidence="7">
    <conflict type="erroneous gene model prediction">
        <sequence resource="EMBL-CDS" id="CAB80353"/>
    </conflict>
</comment>
<organism>
    <name type="scientific">Arabidopsis thaliana</name>
    <name type="common">Mouse-ear cress</name>
    <dbReference type="NCBI Taxonomy" id="3702"/>
    <lineage>
        <taxon>Eukaryota</taxon>
        <taxon>Viridiplantae</taxon>
        <taxon>Streptophyta</taxon>
        <taxon>Embryophyta</taxon>
        <taxon>Tracheophyta</taxon>
        <taxon>Spermatophyta</taxon>
        <taxon>Magnoliopsida</taxon>
        <taxon>eudicotyledons</taxon>
        <taxon>Gunneridae</taxon>
        <taxon>Pentapetalae</taxon>
        <taxon>rosids</taxon>
        <taxon>malvids</taxon>
        <taxon>Brassicales</taxon>
        <taxon>Brassicaceae</taxon>
        <taxon>Camelineae</taxon>
        <taxon>Arabidopsis</taxon>
    </lineage>
</organism>
<name>BLH2_ARATH</name>
<reference key="1">
    <citation type="submission" date="1999-07" db="EMBL/GenBank/DDBJ databases">
        <title>A family of bel1-like homeodomain (BLH) proteins in Arabidopsis thaliana.</title>
        <authorList>
            <person name="Pidkowich M.S."/>
            <person name="Samach A."/>
            <person name="Modrusan Z."/>
            <person name="Haughn G.W."/>
        </authorList>
    </citation>
    <scope>NUCLEOTIDE SEQUENCE [MRNA]</scope>
    <source>
        <strain>cv. Columbia</strain>
        <tissue>Flower</tissue>
    </source>
</reference>
<reference key="2">
    <citation type="journal article" date="1998" name="Nature">
        <title>Analysis of 1.9 Mb of contiguous sequence from chromosome 4 of Arabidopsis thaliana.</title>
        <authorList>
            <person name="Bevan M."/>
            <person name="Bancroft I."/>
            <person name="Bent E."/>
            <person name="Love K."/>
            <person name="Goodman H.M."/>
            <person name="Dean C."/>
            <person name="Bergkamp R."/>
            <person name="Dirkse W."/>
            <person name="van Staveren M."/>
            <person name="Stiekema W."/>
            <person name="Drost L."/>
            <person name="Ridley P."/>
            <person name="Hudson S.-A."/>
            <person name="Patel K."/>
            <person name="Murphy G."/>
            <person name="Piffanelli P."/>
            <person name="Wedler H."/>
            <person name="Wedler E."/>
            <person name="Wambutt R."/>
            <person name="Weitzenegger T."/>
            <person name="Pohl T."/>
            <person name="Terryn N."/>
            <person name="Gielen J."/>
            <person name="Villarroel R."/>
            <person name="De Clercq R."/>
            <person name="van Montagu M."/>
            <person name="Lecharny A."/>
            <person name="Aubourg S."/>
            <person name="Gy I."/>
            <person name="Kreis M."/>
            <person name="Lao N."/>
            <person name="Kavanagh T."/>
            <person name="Hempel S."/>
            <person name="Kotter P."/>
            <person name="Entian K.-D."/>
            <person name="Rieger M."/>
            <person name="Schaefer M."/>
            <person name="Funk B."/>
            <person name="Mueller-Auer S."/>
            <person name="Silvey M."/>
            <person name="James R."/>
            <person name="Monfort A."/>
            <person name="Pons A."/>
            <person name="Puigdomenech P."/>
            <person name="Douka A."/>
            <person name="Voukelatou E."/>
            <person name="Milioni D."/>
            <person name="Hatzopoulos P."/>
            <person name="Piravandi E."/>
            <person name="Obermaier B."/>
            <person name="Hilbert H."/>
            <person name="Duesterhoeft A."/>
            <person name="Moores T."/>
            <person name="Jones J.D.G."/>
            <person name="Eneva T."/>
            <person name="Palme K."/>
            <person name="Benes V."/>
            <person name="Rechmann S."/>
            <person name="Ansorge W."/>
            <person name="Cooke R."/>
            <person name="Berger C."/>
            <person name="Delseny M."/>
            <person name="Voet M."/>
            <person name="Volckaert G."/>
            <person name="Mewes H.-W."/>
            <person name="Klosterman S."/>
            <person name="Schueller C."/>
            <person name="Chalwatzis N."/>
        </authorList>
    </citation>
    <scope>NUCLEOTIDE SEQUENCE [LARGE SCALE GENOMIC DNA]</scope>
    <source>
        <strain>cv. Columbia</strain>
    </source>
</reference>
<reference key="3">
    <citation type="journal article" date="1999" name="Nature">
        <title>Sequence and analysis of chromosome 4 of the plant Arabidopsis thaliana.</title>
        <authorList>
            <person name="Mayer K.F.X."/>
            <person name="Schueller C."/>
            <person name="Wambutt R."/>
            <person name="Murphy G."/>
            <person name="Volckaert G."/>
            <person name="Pohl T."/>
            <person name="Duesterhoeft A."/>
            <person name="Stiekema W."/>
            <person name="Entian K.-D."/>
            <person name="Terryn N."/>
            <person name="Harris B."/>
            <person name="Ansorge W."/>
            <person name="Brandt P."/>
            <person name="Grivell L.A."/>
            <person name="Rieger M."/>
            <person name="Weichselgartner M."/>
            <person name="de Simone V."/>
            <person name="Obermaier B."/>
            <person name="Mache R."/>
            <person name="Mueller M."/>
            <person name="Kreis M."/>
            <person name="Delseny M."/>
            <person name="Puigdomenech P."/>
            <person name="Watson M."/>
            <person name="Schmidtheini T."/>
            <person name="Reichert B."/>
            <person name="Portetelle D."/>
            <person name="Perez-Alonso M."/>
            <person name="Boutry M."/>
            <person name="Bancroft I."/>
            <person name="Vos P."/>
            <person name="Hoheisel J."/>
            <person name="Zimmermann W."/>
            <person name="Wedler H."/>
            <person name="Ridley P."/>
            <person name="Langham S.-A."/>
            <person name="McCullagh B."/>
            <person name="Bilham L."/>
            <person name="Robben J."/>
            <person name="van der Schueren J."/>
            <person name="Grymonprez B."/>
            <person name="Chuang Y.-J."/>
            <person name="Vandenbussche F."/>
            <person name="Braeken M."/>
            <person name="Weltjens I."/>
            <person name="Voet M."/>
            <person name="Bastiaens I."/>
            <person name="Aert R."/>
            <person name="Defoor E."/>
            <person name="Weitzenegger T."/>
            <person name="Bothe G."/>
            <person name="Ramsperger U."/>
            <person name="Hilbert H."/>
            <person name="Braun M."/>
            <person name="Holzer E."/>
            <person name="Brandt A."/>
            <person name="Peters S."/>
            <person name="van Staveren M."/>
            <person name="Dirkse W."/>
            <person name="Mooijman P."/>
            <person name="Klein Lankhorst R."/>
            <person name="Rose M."/>
            <person name="Hauf J."/>
            <person name="Koetter P."/>
            <person name="Berneiser S."/>
            <person name="Hempel S."/>
            <person name="Feldpausch M."/>
            <person name="Lamberth S."/>
            <person name="Van den Daele H."/>
            <person name="De Keyser A."/>
            <person name="Buysshaert C."/>
            <person name="Gielen J."/>
            <person name="Villarroel R."/>
            <person name="De Clercq R."/>
            <person name="van Montagu M."/>
            <person name="Rogers J."/>
            <person name="Cronin A."/>
            <person name="Quail M.A."/>
            <person name="Bray-Allen S."/>
            <person name="Clark L."/>
            <person name="Doggett J."/>
            <person name="Hall S."/>
            <person name="Kay M."/>
            <person name="Lennard N."/>
            <person name="McLay K."/>
            <person name="Mayes R."/>
            <person name="Pettett A."/>
            <person name="Rajandream M.A."/>
            <person name="Lyne M."/>
            <person name="Benes V."/>
            <person name="Rechmann S."/>
            <person name="Borkova D."/>
            <person name="Bloecker H."/>
            <person name="Scharfe M."/>
            <person name="Grimm M."/>
            <person name="Loehnert T.-H."/>
            <person name="Dose S."/>
            <person name="de Haan M."/>
            <person name="Maarse A.C."/>
            <person name="Schaefer M."/>
            <person name="Mueller-Auer S."/>
            <person name="Gabel C."/>
            <person name="Fuchs M."/>
            <person name="Fartmann B."/>
            <person name="Granderath K."/>
            <person name="Dauner D."/>
            <person name="Herzl A."/>
            <person name="Neumann S."/>
            <person name="Argiriou A."/>
            <person name="Vitale D."/>
            <person name="Liguori R."/>
            <person name="Piravandi E."/>
            <person name="Massenet O."/>
            <person name="Quigley F."/>
            <person name="Clabauld G."/>
            <person name="Muendlein A."/>
            <person name="Felber R."/>
            <person name="Schnabl S."/>
            <person name="Hiller R."/>
            <person name="Schmidt W."/>
            <person name="Lecharny A."/>
            <person name="Aubourg S."/>
            <person name="Chefdor F."/>
            <person name="Cooke R."/>
            <person name="Berger C."/>
            <person name="Monfort A."/>
            <person name="Casacuberta E."/>
            <person name="Gibbons T."/>
            <person name="Weber N."/>
            <person name="Vandenbol M."/>
            <person name="Bargues M."/>
            <person name="Terol J."/>
            <person name="Torres A."/>
            <person name="Perez-Perez A."/>
            <person name="Purnelle B."/>
            <person name="Bent E."/>
            <person name="Johnson S."/>
            <person name="Tacon D."/>
            <person name="Jesse T."/>
            <person name="Heijnen L."/>
            <person name="Schwarz S."/>
            <person name="Scholler P."/>
            <person name="Heber S."/>
            <person name="Francs P."/>
            <person name="Bielke C."/>
            <person name="Frishman D."/>
            <person name="Haase D."/>
            <person name="Lemcke K."/>
            <person name="Mewes H.-W."/>
            <person name="Stocker S."/>
            <person name="Zaccaria P."/>
            <person name="Bevan M."/>
            <person name="Wilson R.K."/>
            <person name="de la Bastide M."/>
            <person name="Habermann K."/>
            <person name="Parnell L."/>
            <person name="Dedhia N."/>
            <person name="Gnoj L."/>
            <person name="Schutz K."/>
            <person name="Huang E."/>
            <person name="Spiegel L."/>
            <person name="Sekhon M."/>
            <person name="Murray J."/>
            <person name="Sheet P."/>
            <person name="Cordes M."/>
            <person name="Abu-Threideh J."/>
            <person name="Stoneking T."/>
            <person name="Kalicki J."/>
            <person name="Graves T."/>
            <person name="Harmon G."/>
            <person name="Edwards J."/>
            <person name="Latreille P."/>
            <person name="Courtney L."/>
            <person name="Cloud J."/>
            <person name="Abbott A."/>
            <person name="Scott K."/>
            <person name="Johnson D."/>
            <person name="Minx P."/>
            <person name="Bentley D."/>
            <person name="Fulton B."/>
            <person name="Miller N."/>
            <person name="Greco T."/>
            <person name="Kemp K."/>
            <person name="Kramer J."/>
            <person name="Fulton L."/>
            <person name="Mardis E."/>
            <person name="Dante M."/>
            <person name="Pepin K."/>
            <person name="Hillier L.W."/>
            <person name="Nelson J."/>
            <person name="Spieth J."/>
            <person name="Ryan E."/>
            <person name="Andrews S."/>
            <person name="Geisel C."/>
            <person name="Layman D."/>
            <person name="Du H."/>
            <person name="Ali J."/>
            <person name="Berghoff A."/>
            <person name="Jones K."/>
            <person name="Drone K."/>
            <person name="Cotton M."/>
            <person name="Joshu C."/>
            <person name="Antonoiu B."/>
            <person name="Zidanic M."/>
            <person name="Strong C."/>
            <person name="Sun H."/>
            <person name="Lamar B."/>
            <person name="Yordan C."/>
            <person name="Ma P."/>
            <person name="Zhong J."/>
            <person name="Preston R."/>
            <person name="Vil D."/>
            <person name="Shekher M."/>
            <person name="Matero A."/>
            <person name="Shah R."/>
            <person name="Swaby I.K."/>
            <person name="O'Shaughnessy A."/>
            <person name="Rodriguez M."/>
            <person name="Hoffman J."/>
            <person name="Till S."/>
            <person name="Granat S."/>
            <person name="Shohdy N."/>
            <person name="Hasegawa A."/>
            <person name="Hameed A."/>
            <person name="Lodhi M."/>
            <person name="Johnson A."/>
            <person name="Chen E."/>
            <person name="Marra M.A."/>
            <person name="Martienssen R."/>
            <person name="McCombie W.R."/>
        </authorList>
    </citation>
    <scope>NUCLEOTIDE SEQUENCE [LARGE SCALE GENOMIC DNA]</scope>
    <source>
        <strain>cv. Columbia</strain>
    </source>
</reference>
<reference key="4">
    <citation type="journal article" date="2017" name="Plant J.">
        <title>Araport11: a complete reannotation of the Arabidopsis thaliana reference genome.</title>
        <authorList>
            <person name="Cheng C.Y."/>
            <person name="Krishnakumar V."/>
            <person name="Chan A.P."/>
            <person name="Thibaud-Nissen F."/>
            <person name="Schobel S."/>
            <person name="Town C.D."/>
        </authorList>
    </citation>
    <scope>GENOME REANNOTATION</scope>
    <source>
        <strain>cv. Columbia</strain>
    </source>
</reference>
<reference key="5">
    <citation type="journal article" date="2003" name="Science">
        <title>Empirical analysis of transcriptional activity in the Arabidopsis genome.</title>
        <authorList>
            <person name="Yamada K."/>
            <person name="Lim J."/>
            <person name="Dale J.M."/>
            <person name="Chen H."/>
            <person name="Shinn P."/>
            <person name="Palm C.J."/>
            <person name="Southwick A.M."/>
            <person name="Wu H.C."/>
            <person name="Kim C.J."/>
            <person name="Nguyen M."/>
            <person name="Pham P.K."/>
            <person name="Cheuk R.F."/>
            <person name="Karlin-Newmann G."/>
            <person name="Liu S.X."/>
            <person name="Lam B."/>
            <person name="Sakano H."/>
            <person name="Wu T."/>
            <person name="Yu G."/>
            <person name="Miranda M."/>
            <person name="Quach H.L."/>
            <person name="Tripp M."/>
            <person name="Chang C.H."/>
            <person name="Lee J.M."/>
            <person name="Toriumi M.J."/>
            <person name="Chan M.M."/>
            <person name="Tang C.C."/>
            <person name="Onodera C.S."/>
            <person name="Deng J.M."/>
            <person name="Akiyama K."/>
            <person name="Ansari Y."/>
            <person name="Arakawa T."/>
            <person name="Banh J."/>
            <person name="Banno F."/>
            <person name="Bowser L."/>
            <person name="Brooks S.Y."/>
            <person name="Carninci P."/>
            <person name="Chao Q."/>
            <person name="Choy N."/>
            <person name="Enju A."/>
            <person name="Goldsmith A.D."/>
            <person name="Gurjal M."/>
            <person name="Hansen N.F."/>
            <person name="Hayashizaki Y."/>
            <person name="Johnson-Hopson C."/>
            <person name="Hsuan V.W."/>
            <person name="Iida K."/>
            <person name="Karnes M."/>
            <person name="Khan S."/>
            <person name="Koesema E."/>
            <person name="Ishida J."/>
            <person name="Jiang P.X."/>
            <person name="Jones T."/>
            <person name="Kawai J."/>
            <person name="Kamiya A."/>
            <person name="Meyers C."/>
            <person name="Nakajima M."/>
            <person name="Narusaka M."/>
            <person name="Seki M."/>
            <person name="Sakurai T."/>
            <person name="Satou M."/>
            <person name="Tamse R."/>
            <person name="Vaysberg M."/>
            <person name="Wallender E.K."/>
            <person name="Wong C."/>
            <person name="Yamamura Y."/>
            <person name="Yuan S."/>
            <person name="Shinozaki K."/>
            <person name="Davis R.W."/>
            <person name="Theologis A."/>
            <person name="Ecker J.R."/>
        </authorList>
    </citation>
    <scope>NUCLEOTIDE SEQUENCE [LARGE SCALE MRNA]</scope>
    <source>
        <strain>cv. Columbia</strain>
    </source>
</reference>
<reference key="6">
    <citation type="journal article" date="2004" name="Curr. Biol.">
        <title>Competence to respond to floral inductive signals requires the homeobox genes PENNYWISE and POUND-FOOLISH.</title>
        <authorList>
            <person name="Smith H.M.S."/>
            <person name="Campbell B.C.C."/>
            <person name="Hake S."/>
        </authorList>
    </citation>
    <scope>GENE FAMILY ORGANIZATION</scope>
</reference>
<reference key="7">
    <citation type="journal article" date="2005" name="Proc. Natl. Acad. Sci. U.S.A.">
        <title>A central role of Arabidopsis thaliana ovate family proteins in networking and subcellular localization of 3-aa loop extension homeodomain proteins.</title>
        <authorList>
            <person name="Hackbusch J."/>
            <person name="Richter K."/>
            <person name="Muller J."/>
            <person name="Salamini F."/>
            <person name="Uhrig J.F."/>
        </authorList>
    </citation>
    <scope>INTERACTION WITH OFP1; OFP2; OFP4 AND OFP5</scope>
</reference>
<reference key="8">
    <citation type="journal article" date="2007" name="Plant Cell">
        <title>The Arabidopsis BEL1-LIKE HOMEODOMAIN proteins SAW1 and SAW2 act redundantly to regulate KNOX expression spatially in leaf margins.</title>
        <authorList>
            <person name="Kumar R."/>
            <person name="Kushalappa K."/>
            <person name="Godt D."/>
            <person name="Pidkowich M.S."/>
            <person name="Pastorelli S."/>
            <person name="Hepworth S.R."/>
            <person name="Haughn G.W."/>
        </authorList>
    </citation>
    <scope>INTERACTION WITH TALE/KNOX PROTEINS</scope>
    <scope>TISSUE SPECIFICITY</scope>
</reference>
<reference key="9">
    <citation type="journal article" date="2008" name="Plant Cell">
        <title>KNOX lost the OX: the Arabidopsis KNATM gene defines a novel class of KNOX transcriptional regulators missing the homeodomain.</title>
        <authorList>
            <person name="Magnani E."/>
            <person name="Hake S."/>
        </authorList>
    </citation>
    <scope>INTERACTION WITH KNATM</scope>
</reference>
<feature type="chain" id="PRO_0000315458" description="BEL1-like homeodomain protein 2">
    <location>
        <begin position="1"/>
        <end position="739"/>
    </location>
</feature>
<feature type="DNA-binding region" description="Homeobox" evidence="2">
    <location>
        <begin position="498"/>
        <end position="560"/>
    </location>
</feature>
<feature type="region of interest" description="Disordered" evidence="3">
    <location>
        <begin position="23"/>
        <end position="73"/>
    </location>
</feature>
<feature type="region of interest" description="Disordered" evidence="3">
    <location>
        <begin position="143"/>
        <end position="222"/>
    </location>
</feature>
<feature type="region of interest" description="SR/KY domain" evidence="1">
    <location>
        <begin position="316"/>
        <end position="332"/>
    </location>
</feature>
<feature type="region of interest" description="Disordered" evidence="3">
    <location>
        <begin position="341"/>
        <end position="378"/>
    </location>
</feature>
<feature type="region of interest" description="BELL domain" evidence="1">
    <location>
        <begin position="376"/>
        <end position="447"/>
    </location>
</feature>
<feature type="region of interest" description="Disordered" evidence="3">
    <location>
        <begin position="567"/>
        <end position="627"/>
    </location>
</feature>
<feature type="compositionally biased region" description="Polar residues" evidence="3">
    <location>
        <begin position="41"/>
        <end position="58"/>
    </location>
</feature>
<feature type="compositionally biased region" description="Pro residues" evidence="3">
    <location>
        <begin position="145"/>
        <end position="155"/>
    </location>
</feature>
<feature type="compositionally biased region" description="Low complexity" evidence="3">
    <location>
        <begin position="179"/>
        <end position="190"/>
    </location>
</feature>
<feature type="compositionally biased region" description="Acidic residues" evidence="3">
    <location>
        <begin position="576"/>
        <end position="585"/>
    </location>
</feature>
<feature type="compositionally biased region" description="Basic and acidic residues" evidence="3">
    <location>
        <begin position="586"/>
        <end position="596"/>
    </location>
</feature>
<feature type="compositionally biased region" description="Low complexity" evidence="3">
    <location>
        <begin position="597"/>
        <end position="627"/>
    </location>
</feature>
<feature type="sequence conflict" description="In Ref. 1; AAD51349 and 5; AAK91472." evidence="7" ref="1 5">
    <original>N</original>
    <variation>Q</variation>
    <location>
        <position position="485"/>
    </location>
</feature>
<gene>
    <name type="primary">BLH2</name>
    <name type="synonym">SAW1</name>
    <name type="ordered locus">At4g36870</name>
    <name type="ORF">AP22.90</name>
    <name type="ORF">C7A10.490</name>
</gene>
<keyword id="KW-0238">DNA-binding</keyword>
<keyword id="KW-0371">Homeobox</keyword>
<keyword id="KW-0539">Nucleus</keyword>
<keyword id="KW-1185">Reference proteome</keyword>
<keyword id="KW-0804">Transcription</keyword>
<keyword id="KW-0805">Transcription regulation</keyword>